<gene>
    <name type="primary">TMEM218</name>
</gene>
<keyword id="KW-0966">Cell projection</keyword>
<keyword id="KW-1186">Ciliopathy</keyword>
<keyword id="KW-0225">Disease variant</keyword>
<keyword id="KW-0979">Joubert syndrome</keyword>
<keyword id="KW-0472">Membrane</keyword>
<keyword id="KW-1267">Proteomics identification</keyword>
<keyword id="KW-1185">Reference proteome</keyword>
<keyword id="KW-0812">Transmembrane</keyword>
<keyword id="KW-1133">Transmembrane helix</keyword>
<reference key="1">
    <citation type="submission" date="2005-07" db="EMBL/GenBank/DDBJ databases">
        <authorList>
            <person name="Mural R.J."/>
            <person name="Istrail S."/>
            <person name="Sutton G.G."/>
            <person name="Florea L."/>
            <person name="Halpern A.L."/>
            <person name="Mobarry C.M."/>
            <person name="Lippert R."/>
            <person name="Walenz B."/>
            <person name="Shatkay H."/>
            <person name="Dew I."/>
            <person name="Miller J.R."/>
            <person name="Flanigan M.J."/>
            <person name="Edwards N.J."/>
            <person name="Bolanos R."/>
            <person name="Fasulo D."/>
            <person name="Halldorsson B.V."/>
            <person name="Hannenhalli S."/>
            <person name="Turner R."/>
            <person name="Yooseph S."/>
            <person name="Lu F."/>
            <person name="Nusskern D.R."/>
            <person name="Shue B.C."/>
            <person name="Zheng X.H."/>
            <person name="Zhong F."/>
            <person name="Delcher A.L."/>
            <person name="Huson D.H."/>
            <person name="Kravitz S.A."/>
            <person name="Mouchard L."/>
            <person name="Reinert K."/>
            <person name="Remington K.A."/>
            <person name="Clark A.G."/>
            <person name="Waterman M.S."/>
            <person name="Eichler E.E."/>
            <person name="Adams M.D."/>
            <person name="Hunkapiller M.W."/>
            <person name="Myers E.W."/>
            <person name="Venter J.C."/>
        </authorList>
    </citation>
    <scope>NUCLEOTIDE SEQUENCE [LARGE SCALE GENOMIC DNA]</scope>
</reference>
<reference key="2">
    <citation type="journal article" date="2004" name="Genome Res.">
        <title>The status, quality, and expansion of the NIH full-length cDNA project: the Mammalian Gene Collection (MGC).</title>
        <authorList>
            <consortium name="The MGC Project Team"/>
        </authorList>
    </citation>
    <scope>NUCLEOTIDE SEQUENCE [LARGE SCALE MRNA]</scope>
</reference>
<reference key="3">
    <citation type="journal article" date="2021" name="HGG Adv.">
        <title>TMEM218 dysfunction causes ciliopathies, including Joubert and Meckel syndromes.</title>
        <authorList>
            <consortium name="University of Washington Center for Mendelian Genomics"/>
            <person name="Van De Weghe J.C."/>
            <person name="Giordano J.L."/>
            <person name="Mathijssen I.B."/>
            <person name="Mojarrad M."/>
            <person name="Lugtenberg D."/>
            <person name="Miller C.V."/>
            <person name="Dempsey J.C."/>
            <person name="Mohajeri M.S.A."/>
            <person name="van Leeuwen E."/>
            <person name="Pajkrt E."/>
            <person name="Klaver C.C.W."/>
            <person name="Houlden H."/>
            <person name="Eslahi A."/>
            <person name="Waters A.M."/>
            <person name="Bamshad M.J."/>
            <person name="Nickerson D.A."/>
            <person name="Aggarwal V.S."/>
            <person name="de Vries B.B.A."/>
            <person name="Maroofian R."/>
            <person name="Doherty D."/>
        </authorList>
    </citation>
    <scope>VARIANTS JBTS39 VAL-9; CYS-80 AND HIS-80</scope>
    <scope>VARIANT 59-ARG--TYR-115 DEL</scope>
    <scope>INVOLVEMENT IN JBTS39</scope>
    <scope>INVOLVEMENT IN CILIOPATHIES</scope>
</reference>
<reference key="4">
    <citation type="journal article" date="2022" name="Hum. Mol. Genet.">
        <title>The ciliary transition zone protein TMEM218 synergistically interacts with the NPHP module and its reduced dosage leads to a wide range of syndromic ciliopathies.</title>
        <authorList>
            <person name="Epting D."/>
            <person name="Decker E."/>
            <person name="Ott E."/>
            <person name="Eisenberger T."/>
            <person name="Bader I."/>
            <person name="Bachmann N."/>
            <person name="Bergmann C."/>
        </authorList>
    </citation>
    <scope>VARIANT JBTS39 SER-37</scope>
    <scope>VARIANT 59-ARG--TYR-115 DEL</scope>
    <scope>INVOLVEMENT IN JBTS39</scope>
    <scope>INVOLVEMENT IN CILIOPATHIES</scope>
    <scope>INTERACTION WITH TMEM67</scope>
</reference>
<sequence>MAGTVLGVGAGVFILALLWVAVLLLCVLLSRASGAARFSVIFLFFGAVIITSVLLLFPRAGEFPAPEVEVKIVDDFFIGRYVLLAFLSAIFLGGLFLVLIHYVLEPIYAKPLHSY</sequence>
<dbReference type="EMBL" id="CH471065">
    <property type="protein sequence ID" value="EAW67625.1"/>
    <property type="molecule type" value="Genomic_DNA"/>
</dbReference>
<dbReference type="EMBL" id="BC132716">
    <property type="protein sequence ID" value="AAI32717.1"/>
    <property type="molecule type" value="mRNA"/>
</dbReference>
<dbReference type="EMBL" id="BC132718">
    <property type="protein sequence ID" value="AAI32719.1"/>
    <property type="molecule type" value="mRNA"/>
</dbReference>
<dbReference type="EMBL" id="BC144270">
    <property type="protein sequence ID" value="AAI44271.1"/>
    <property type="molecule type" value="mRNA"/>
</dbReference>
<dbReference type="EMBL" id="BC144277">
    <property type="protein sequence ID" value="AAI44278.1"/>
    <property type="molecule type" value="mRNA"/>
</dbReference>
<dbReference type="CCDS" id="CCDS31715.1"/>
<dbReference type="RefSeq" id="NP_001074015.1">
    <property type="nucleotide sequence ID" value="NM_001080546.3"/>
</dbReference>
<dbReference type="RefSeq" id="NP_001245167.1">
    <property type="nucleotide sequence ID" value="NM_001258238.2"/>
</dbReference>
<dbReference type="RefSeq" id="NP_001245168.2">
    <property type="nucleotide sequence ID" value="NM_001258239.3"/>
</dbReference>
<dbReference type="RefSeq" id="NP_001245169.1">
    <property type="nucleotide sequence ID" value="NM_001258240.2"/>
</dbReference>
<dbReference type="RefSeq" id="NP_001245170.1">
    <property type="nucleotide sequence ID" value="NM_001258241.2"/>
</dbReference>
<dbReference type="RefSeq" id="NP_001245171.2">
    <property type="nucleotide sequence ID" value="NM_001258242.3"/>
</dbReference>
<dbReference type="RefSeq" id="NP_001245172.2">
    <property type="nucleotide sequence ID" value="NM_001258243.3"/>
</dbReference>
<dbReference type="RefSeq" id="NP_001245173.1">
    <property type="nucleotide sequence ID" value="NM_001258244.2"/>
</dbReference>
<dbReference type="RefSeq" id="NP_001245174.1">
    <property type="nucleotide sequence ID" value="NM_001258245.2"/>
</dbReference>
<dbReference type="RefSeq" id="NP_001245175.2">
    <property type="nucleotide sequence ID" value="NM_001258246.3"/>
</dbReference>
<dbReference type="RefSeq" id="NP_001245176.1">
    <property type="nucleotide sequence ID" value="NM_001258247.2"/>
</dbReference>
<dbReference type="RefSeq" id="NP_001374159.1">
    <property type="nucleotide sequence ID" value="NM_001387230.1"/>
</dbReference>
<dbReference type="RefSeq" id="NP_001374160.1">
    <property type="nucleotide sequence ID" value="NM_001387231.1"/>
</dbReference>
<dbReference type="RefSeq" id="NP_001374161.1">
    <property type="nucleotide sequence ID" value="NM_001387232.1"/>
</dbReference>
<dbReference type="RefSeq" id="NP_001374162.1">
    <property type="nucleotide sequence ID" value="NM_001387233.1"/>
</dbReference>
<dbReference type="RefSeq" id="NP_001374163.1">
    <property type="nucleotide sequence ID" value="NM_001387234.1"/>
</dbReference>
<dbReference type="RefSeq" id="NP_001374164.1">
    <property type="nucleotide sequence ID" value="NM_001387235.1"/>
</dbReference>
<dbReference type="RefSeq" id="NP_001374165.1">
    <property type="nucleotide sequence ID" value="NM_001387236.1"/>
</dbReference>
<dbReference type="RefSeq" id="NP_001374166.1">
    <property type="nucleotide sequence ID" value="NM_001387237.1"/>
</dbReference>
<dbReference type="RefSeq" id="NP_001374167.1">
    <property type="nucleotide sequence ID" value="NM_001387238.1"/>
</dbReference>
<dbReference type="RefSeq" id="NP_001374168.1">
    <property type="nucleotide sequence ID" value="NM_001387239.1"/>
</dbReference>
<dbReference type="RefSeq" id="NP_001374169.1">
    <property type="nucleotide sequence ID" value="NM_001387240.1"/>
</dbReference>
<dbReference type="RefSeq" id="NP_001374170.1">
    <property type="nucleotide sequence ID" value="NM_001387241.1"/>
</dbReference>
<dbReference type="RefSeq" id="NP_001374171.1">
    <property type="nucleotide sequence ID" value="NM_001387242.1"/>
</dbReference>
<dbReference type="RefSeq" id="NP_001374173.1">
    <property type="nucleotide sequence ID" value="NM_001387244.1"/>
</dbReference>
<dbReference type="RefSeq" id="NP_001374174.1">
    <property type="nucleotide sequence ID" value="NM_001387245.1"/>
</dbReference>
<dbReference type="RefSeq" id="NP_001374175.1">
    <property type="nucleotide sequence ID" value="NM_001387246.1"/>
</dbReference>
<dbReference type="RefSeq" id="NP_001374176.1">
    <property type="nucleotide sequence ID" value="NM_001387247.1"/>
</dbReference>
<dbReference type="RefSeq" id="NP_001374177.1">
    <property type="nucleotide sequence ID" value="NM_001387248.1"/>
</dbReference>
<dbReference type="RefSeq" id="XP_006718846.1">
    <property type="nucleotide sequence ID" value="XM_006718783.3"/>
</dbReference>
<dbReference type="RefSeq" id="XP_016872811.1">
    <property type="nucleotide sequence ID" value="XM_017017322.1"/>
</dbReference>
<dbReference type="RefSeq" id="XP_016872812.1">
    <property type="nucleotide sequence ID" value="XM_017017323.1"/>
</dbReference>
<dbReference type="RefSeq" id="XP_016872813.1">
    <property type="nucleotide sequence ID" value="XM_017017324.1"/>
</dbReference>
<dbReference type="SMR" id="A2RU14"/>
<dbReference type="BioGRID" id="128583">
    <property type="interactions" value="79"/>
</dbReference>
<dbReference type="FunCoup" id="A2RU14">
    <property type="interactions" value="162"/>
</dbReference>
<dbReference type="IntAct" id="A2RU14">
    <property type="interactions" value="69"/>
</dbReference>
<dbReference type="STRING" id="9606.ENSP00000436596"/>
<dbReference type="TCDB" id="9.B.438.1.1">
    <property type="family name" value="the trans membrane protein tmem218 (tmem218) family"/>
</dbReference>
<dbReference type="BioMuta" id="TMEM218"/>
<dbReference type="jPOST" id="A2RU14"/>
<dbReference type="MassIVE" id="A2RU14"/>
<dbReference type="PaxDb" id="9606-ENSP00000436596"/>
<dbReference type="PeptideAtlas" id="A2RU14"/>
<dbReference type="ProteomicsDB" id="491"/>
<dbReference type="TopDownProteomics" id="A2RU14"/>
<dbReference type="Antibodypedia" id="50074">
    <property type="antibodies" value="9 antibodies from 8 providers"/>
</dbReference>
<dbReference type="DNASU" id="219854"/>
<dbReference type="Ensembl" id="ENST00000279968.8">
    <property type="protein sequence ID" value="ENSP00000279968.4"/>
    <property type="gene ID" value="ENSG00000150433.10"/>
</dbReference>
<dbReference type="Ensembl" id="ENST00000526175.5">
    <property type="protein sequence ID" value="ENSP00000436177.1"/>
    <property type="gene ID" value="ENSG00000150433.10"/>
</dbReference>
<dbReference type="Ensembl" id="ENST00000527271.5">
    <property type="protein sequence ID" value="ENSP00000436162.1"/>
    <property type="gene ID" value="ENSG00000150433.10"/>
</dbReference>
<dbReference type="Ensembl" id="ENST00000527766.5">
    <property type="protein sequence ID" value="ENSP00000435526.1"/>
    <property type="gene ID" value="ENSG00000150433.10"/>
</dbReference>
<dbReference type="Ensembl" id="ENST00000529583.5">
    <property type="protein sequence ID" value="ENSP00000433374.1"/>
    <property type="gene ID" value="ENSG00000150433.10"/>
</dbReference>
<dbReference type="Ensembl" id="ENST00000531909.5">
    <property type="protein sequence ID" value="ENSP00000436596.1"/>
    <property type="gene ID" value="ENSG00000150433.10"/>
</dbReference>
<dbReference type="Ensembl" id="ENST00000532407.5">
    <property type="protein sequence ID" value="ENSP00000434597.1"/>
    <property type="gene ID" value="ENSG00000150433.10"/>
</dbReference>
<dbReference type="Ensembl" id="ENST00000682305.1">
    <property type="protein sequence ID" value="ENSP00000506979.1"/>
    <property type="gene ID" value="ENSG00000150433.10"/>
</dbReference>
<dbReference type="GeneID" id="219854"/>
<dbReference type="KEGG" id="hsa:219854"/>
<dbReference type="MANE-Select" id="ENST00000682305.1">
    <property type="protein sequence ID" value="ENSP00000506979.1"/>
    <property type="RefSeq nucleotide sequence ID" value="NM_001258244.2"/>
    <property type="RefSeq protein sequence ID" value="NP_001245173.1"/>
</dbReference>
<dbReference type="UCSC" id="uc010sax.5">
    <property type="organism name" value="human"/>
</dbReference>
<dbReference type="AGR" id="HGNC:27344"/>
<dbReference type="CTD" id="219854"/>
<dbReference type="DisGeNET" id="219854"/>
<dbReference type="GeneCards" id="TMEM218"/>
<dbReference type="HGNC" id="HGNC:27344">
    <property type="gene designation" value="TMEM218"/>
</dbReference>
<dbReference type="HPA" id="ENSG00000150433">
    <property type="expression patterns" value="Low tissue specificity"/>
</dbReference>
<dbReference type="MalaCards" id="TMEM218"/>
<dbReference type="MIM" id="619285">
    <property type="type" value="gene"/>
</dbReference>
<dbReference type="MIM" id="619562">
    <property type="type" value="phenotype"/>
</dbReference>
<dbReference type="neXtProt" id="NX_A2RU14"/>
<dbReference type="OpenTargets" id="ENSG00000150433"/>
<dbReference type="Orphanet" id="475">
    <property type="disease" value="Joubert syndrome"/>
</dbReference>
<dbReference type="PharmGKB" id="PA162406569"/>
<dbReference type="VEuPathDB" id="HostDB:ENSG00000150433"/>
<dbReference type="eggNOG" id="ENOG502S2I1">
    <property type="taxonomic scope" value="Eukaryota"/>
</dbReference>
<dbReference type="GeneTree" id="ENSGT00390000016247"/>
<dbReference type="InParanoid" id="A2RU14"/>
<dbReference type="OMA" id="PATEMKI"/>
<dbReference type="OrthoDB" id="5978182at2759"/>
<dbReference type="PAN-GO" id="A2RU14">
    <property type="GO annotations" value="0 GO annotations based on evolutionary models"/>
</dbReference>
<dbReference type="PhylomeDB" id="A2RU14"/>
<dbReference type="TreeFam" id="TF328597"/>
<dbReference type="PathwayCommons" id="A2RU14"/>
<dbReference type="SignaLink" id="A2RU14"/>
<dbReference type="BioGRID-ORCS" id="219854">
    <property type="hits" value="8 hits in 1145 CRISPR screens"/>
</dbReference>
<dbReference type="ChiTaRS" id="TMEM218">
    <property type="organism name" value="human"/>
</dbReference>
<dbReference type="GenomeRNAi" id="219854"/>
<dbReference type="Pharos" id="A2RU14">
    <property type="development level" value="Tdark"/>
</dbReference>
<dbReference type="PRO" id="PR:A2RU14"/>
<dbReference type="Proteomes" id="UP000005640">
    <property type="component" value="Chromosome 11"/>
</dbReference>
<dbReference type="RNAct" id="A2RU14">
    <property type="molecule type" value="protein"/>
</dbReference>
<dbReference type="Bgee" id="ENSG00000150433">
    <property type="expression patterns" value="Expressed in right uterine tube and 180 other cell types or tissues"/>
</dbReference>
<dbReference type="ExpressionAtlas" id="A2RU14">
    <property type="expression patterns" value="baseline and differential"/>
</dbReference>
<dbReference type="GO" id="GO:0005929">
    <property type="term" value="C:cilium"/>
    <property type="evidence" value="ECO:0007669"/>
    <property type="project" value="UniProtKB-SubCell"/>
</dbReference>
<dbReference type="GO" id="GO:0016020">
    <property type="term" value="C:membrane"/>
    <property type="evidence" value="ECO:0007669"/>
    <property type="project" value="UniProtKB-SubCell"/>
</dbReference>
<dbReference type="InterPro" id="IPR026771">
    <property type="entry name" value="Tmem218"/>
</dbReference>
<dbReference type="PANTHER" id="PTHR31622">
    <property type="entry name" value="TRANSMEMBRANE PROTEIN 218"/>
    <property type="match status" value="1"/>
</dbReference>
<dbReference type="PANTHER" id="PTHR31622:SF1">
    <property type="entry name" value="TRANSMEMBRANE PROTEIN 218"/>
    <property type="match status" value="1"/>
</dbReference>
<name>TM218_HUMAN</name>
<organism>
    <name type="scientific">Homo sapiens</name>
    <name type="common">Human</name>
    <dbReference type="NCBI Taxonomy" id="9606"/>
    <lineage>
        <taxon>Eukaryota</taxon>
        <taxon>Metazoa</taxon>
        <taxon>Chordata</taxon>
        <taxon>Craniata</taxon>
        <taxon>Vertebrata</taxon>
        <taxon>Euteleostomi</taxon>
        <taxon>Mammalia</taxon>
        <taxon>Eutheria</taxon>
        <taxon>Euarchontoglires</taxon>
        <taxon>Primates</taxon>
        <taxon>Haplorrhini</taxon>
        <taxon>Catarrhini</taxon>
        <taxon>Hominidae</taxon>
        <taxon>Homo</taxon>
    </lineage>
</organism>
<proteinExistence type="evidence at protein level"/>
<feature type="chain" id="PRO_0000321836" description="Transmembrane protein 218">
    <location>
        <begin position="1"/>
        <end position="115"/>
    </location>
</feature>
<feature type="transmembrane region" description="Helical" evidence="2">
    <location>
        <begin position="5"/>
        <end position="25"/>
    </location>
</feature>
<feature type="transmembrane region" description="Helical" evidence="2">
    <location>
        <begin position="38"/>
        <end position="58"/>
    </location>
</feature>
<feature type="transmembrane region" description="Helical" evidence="2">
    <location>
        <begin position="81"/>
        <end position="101"/>
    </location>
</feature>
<feature type="sequence variant" id="VAR_086385" description="In JBTS39; uncertain significance." evidence="3">
    <original>G</original>
    <variation>V</variation>
    <location>
        <position position="9"/>
    </location>
</feature>
<feature type="sequence variant" id="VAR_086402" description="In JBTS39; fails to rescue the ciliopathy phenotype in a zebrafish disease model." evidence="4">
    <original>R</original>
    <variation>S</variation>
    <location>
        <position position="37"/>
    </location>
</feature>
<feature type="sequence variant" id="VAR_086386" description="Found in patients with Meckel syndrome; likely pathogenic." evidence="3 4">
    <location>
        <begin position="59"/>
        <end position="115"/>
    </location>
</feature>
<feature type="sequence variant" id="VAR_086387" description="In JBTS39." evidence="3">
    <original>R</original>
    <variation>C</variation>
    <location>
        <position position="80"/>
    </location>
</feature>
<feature type="sequence variant" id="VAR_086388" description="In JBTS39." evidence="3">
    <original>R</original>
    <variation>H</variation>
    <location>
        <position position="80"/>
    </location>
</feature>
<comment type="function">
    <text evidence="1">May be involved in ciliary biogenesis or function.</text>
</comment>
<comment type="subunit">
    <text evidence="4">Interacts with TMEM67.</text>
</comment>
<comment type="interaction">
    <interactant intactId="EBI-10173151">
        <id>A2RU14</id>
    </interactant>
    <interactant intactId="EBI-2606935">
        <id>Q96BI3</id>
        <label>APH1A</label>
    </interactant>
    <organismsDiffer>false</organismsDiffer>
    <experiments>3</experiments>
</comment>
<comment type="interaction">
    <interactant intactId="EBI-10173151">
        <id>A2RU14</id>
    </interactant>
    <interactant intactId="EBI-12701138">
        <id>P41181</id>
        <label>AQP2</label>
    </interactant>
    <organismsDiffer>false</organismsDiffer>
    <experiments>3</experiments>
</comment>
<comment type="interaction">
    <interactant intactId="EBI-10173151">
        <id>A2RU14</id>
    </interactant>
    <interactant intactId="EBI-13059134">
        <id>Q13520</id>
        <label>AQP6</label>
    </interactant>
    <organismsDiffer>false</organismsDiffer>
    <experiments>3</experiments>
</comment>
<comment type="interaction">
    <interactant intactId="EBI-10173151">
        <id>A2RU14</id>
    </interactant>
    <interactant intactId="EBI-11343438">
        <id>Q3SXY8</id>
        <label>ARL13B</label>
    </interactant>
    <organismsDiffer>false</organismsDiffer>
    <experiments>3</experiments>
</comment>
<comment type="interaction">
    <interactant intactId="EBI-10173151">
        <id>A2RU14</id>
    </interactant>
    <interactant intactId="EBI-12239061">
        <id>Q8WWH4</id>
        <label>ASZ1</label>
    </interactant>
    <organismsDiffer>false</organismsDiffer>
    <experiments>3</experiments>
</comment>
<comment type="interaction">
    <interactant intactId="EBI-10173151">
        <id>A2RU14</id>
    </interactant>
    <interactant intactId="EBI-12935759">
        <id>O15342</id>
        <label>ATP6V0E1</label>
    </interactant>
    <organismsDiffer>false</organismsDiffer>
    <experiments>3</experiments>
</comment>
<comment type="interaction">
    <interactant intactId="EBI-10173151">
        <id>A2RU14</id>
    </interactant>
    <interactant intactId="EBI-11532900">
        <id>J3KQ12</id>
        <label>BSCL2</label>
    </interactant>
    <organismsDiffer>false</organismsDiffer>
    <experiments>3</experiments>
</comment>
<comment type="interaction">
    <interactant intactId="EBI-10173151">
        <id>A2RU14</id>
    </interactant>
    <interactant intactId="EBI-10320732">
        <id>Q9UGN4</id>
        <label>CD300A</label>
    </interactant>
    <organismsDiffer>false</organismsDiffer>
    <experiments>3</experiments>
</comment>
<comment type="interaction">
    <interactant intactId="EBI-10173151">
        <id>A2RU14</id>
    </interactant>
    <interactant intactId="EBI-6657396">
        <id>P19397</id>
        <label>CD53</label>
    </interactant>
    <organismsDiffer>false</organismsDiffer>
    <experiments>3</experiments>
</comment>
<comment type="interaction">
    <interactant intactId="EBI-10173151">
        <id>A2RU14</id>
    </interactant>
    <interactant intactId="EBI-7797864">
        <id>P11912</id>
        <label>CD79A</label>
    </interactant>
    <organismsDiffer>false</organismsDiffer>
    <experiments>3</experiments>
</comment>
<comment type="interaction">
    <interactant intactId="EBI-10173151">
        <id>A2RU14</id>
    </interactant>
    <interactant intactId="EBI-751440">
        <id>P57739</id>
        <label>CLDN2</label>
    </interactant>
    <organismsDiffer>false</organismsDiffer>
    <experiments>3</experiments>
</comment>
<comment type="interaction">
    <interactant intactId="EBI-10173151">
        <id>A2RU14</id>
    </interactant>
    <interactant intactId="EBI-2873246">
        <id>Q8IUN9</id>
        <label>CLEC10A</label>
    </interactant>
    <organismsDiffer>false</organismsDiffer>
    <experiments>3</experiments>
</comment>
<comment type="interaction">
    <interactant intactId="EBI-10173151">
        <id>A2RU14</id>
    </interactant>
    <interactant intactId="EBI-11977093">
        <id>Q6ZS10</id>
        <label>CLEC17A</label>
    </interactant>
    <organismsDiffer>false</organismsDiffer>
    <experiments>3</experiments>
</comment>
<comment type="interaction">
    <interactant intactId="EBI-10173151">
        <id>A2RU14</id>
    </interactant>
    <interactant intactId="EBI-18013275">
        <id>Q7Z7G2</id>
        <label>CPLX4</label>
    </interactant>
    <organismsDiffer>false</organismsDiffer>
    <experiments>3</experiments>
</comment>
<comment type="interaction">
    <interactant intactId="EBI-10173151">
        <id>A2RU14</id>
    </interactant>
    <interactant intactId="EBI-6942903">
        <id>Q96BA8</id>
        <label>CREB3L1</label>
    </interactant>
    <organismsDiffer>false</organismsDiffer>
    <experiments>7</experiments>
</comment>
<comment type="interaction">
    <interactant intactId="EBI-10173151">
        <id>A2RU14</id>
    </interactant>
    <interactant intactId="EBI-1030991">
        <id>P16410</id>
        <label>CTLA4</label>
    </interactant>
    <organismsDiffer>false</organismsDiffer>
    <experiments>3</experiments>
</comment>
<comment type="interaction">
    <interactant intactId="EBI-10173151">
        <id>A2RU14</id>
    </interactant>
    <interactant intactId="EBI-12808806">
        <id>Q9Y4D2</id>
        <label>DAGLA</label>
    </interactant>
    <organismsDiffer>false</organismsDiffer>
    <experiments>3</experiments>
</comment>
<comment type="interaction">
    <interactant intactId="EBI-10173151">
        <id>A2RU14</id>
    </interactant>
    <interactant intactId="EBI-3915253">
        <id>Q15125</id>
        <label>EBP</label>
    </interactant>
    <organismsDiffer>false</organismsDiffer>
    <experiments>3</experiments>
</comment>
<comment type="interaction">
    <interactant intactId="EBI-10173151">
        <id>A2RU14</id>
    </interactant>
    <interactant intactId="EBI-17206972">
        <id>Q9NXB9</id>
        <label>ELOVL2</label>
    </interactant>
    <organismsDiffer>false</organismsDiffer>
    <experiments>3</experiments>
</comment>
<comment type="interaction">
    <interactant intactId="EBI-10173151">
        <id>A2RU14</id>
    </interactant>
    <interactant intactId="EBI-18535450">
        <id>Q9GZR5</id>
        <label>ELOVL4</label>
    </interactant>
    <organismsDiffer>false</organismsDiffer>
    <experiments>3</experiments>
</comment>
<comment type="interaction">
    <interactant intactId="EBI-10173151">
        <id>A2RU14</id>
    </interactant>
    <interactant intactId="EBI-4319440">
        <id>P54849</id>
        <label>EMP1</label>
    </interactant>
    <organismsDiffer>false</organismsDiffer>
    <experiments>3</experiments>
</comment>
<comment type="interaction">
    <interactant intactId="EBI-10173151">
        <id>A2RU14</id>
    </interactant>
    <interactant intactId="EBI-781551">
        <id>Q9Y282</id>
        <label>ERGIC3</label>
    </interactant>
    <organismsDiffer>false</organismsDiffer>
    <experiments>3</experiments>
</comment>
<comment type="interaction">
    <interactant intactId="EBI-10173151">
        <id>A2RU14</id>
    </interactant>
    <interactant intactId="EBI-18304435">
        <id>Q5JX71</id>
        <label>FAM209A</label>
    </interactant>
    <organismsDiffer>false</organismsDiffer>
    <experiments>3</experiments>
</comment>
<comment type="interaction">
    <interactant intactId="EBI-10173151">
        <id>A2RU14</id>
    </interactant>
    <interactant intactId="EBI-6911547">
        <id>A2A2Y4</id>
        <label>FRMD3</label>
    </interactant>
    <organismsDiffer>false</organismsDiffer>
    <experiments>3</experiments>
</comment>
<comment type="interaction">
    <interactant intactId="EBI-10173151">
        <id>A2RU14</id>
    </interactant>
    <interactant intactId="EBI-11110431">
        <id>Q8TB36</id>
        <label>GDAP1</label>
    </interactant>
    <organismsDiffer>false</organismsDiffer>
    <experiments>3</experiments>
</comment>
<comment type="interaction">
    <interactant intactId="EBI-10173151">
        <id>A2RU14</id>
    </interactant>
    <interactant intactId="EBI-17565645">
        <id>P08034</id>
        <label>GJB1</label>
    </interactant>
    <organismsDiffer>false</organismsDiffer>
    <experiments>3</experiments>
</comment>
<comment type="interaction">
    <interactant intactId="EBI-10173151">
        <id>A2RU14</id>
    </interactant>
    <interactant intactId="EBI-12831526">
        <id>Q9NTQ9</id>
        <label>GJB4</label>
    </interactant>
    <organismsDiffer>false</organismsDiffer>
    <experiments>3</experiments>
</comment>
<comment type="interaction">
    <interactant intactId="EBI-10173151">
        <id>A2RU14</id>
    </interactant>
    <interactant intactId="EBI-13345609">
        <id>O95452</id>
        <label>GJB6</label>
    </interactant>
    <organismsDiffer>false</organismsDiffer>
    <experiments>3</experiments>
</comment>
<comment type="interaction">
    <interactant intactId="EBI-10173151">
        <id>A2RU14</id>
    </interactant>
    <interactant intactId="EBI-13345167">
        <id>Q8TDT2</id>
        <label>GPR152</label>
    </interactant>
    <organismsDiffer>false</organismsDiffer>
    <experiments>3</experiments>
</comment>
<comment type="interaction">
    <interactant intactId="EBI-10173151">
        <id>A2RU14</id>
    </interactant>
    <interactant intactId="EBI-12808020">
        <id>Q9BZJ8</id>
        <label>GPR61</label>
    </interactant>
    <organismsDiffer>false</organismsDiffer>
    <experiments>3</experiments>
</comment>
<comment type="interaction">
    <interactant intactId="EBI-10173151">
        <id>A2RU14</id>
    </interactant>
    <interactant intactId="EBI-11721746">
        <id>Q8TED1</id>
        <label>GPX8</label>
    </interactant>
    <organismsDiffer>false</organismsDiffer>
    <experiments>3</experiments>
</comment>
<comment type="interaction">
    <interactant intactId="EBI-10173151">
        <id>A2RU14</id>
    </interactant>
    <interactant intactId="EBI-3905457">
        <id>P38484</id>
        <label>IFNGR2</label>
    </interactant>
    <organismsDiffer>false</organismsDiffer>
    <experiments>3</experiments>
</comment>
<comment type="interaction">
    <interactant intactId="EBI-10173151">
        <id>A2RU14</id>
    </interactant>
    <interactant intactId="EBI-12017638">
        <id>P48051</id>
        <label>KCNJ6</label>
    </interactant>
    <organismsDiffer>false</organismsDiffer>
    <experiments>3</experiments>
</comment>
<comment type="interaction">
    <interactant intactId="EBI-10173151">
        <id>A2RU14</id>
    </interactant>
    <interactant intactId="EBI-3934936">
        <id>O95279</id>
        <label>KCNK5</label>
    </interactant>
    <organismsDiffer>false</organismsDiffer>
    <experiments>3</experiments>
</comment>
<comment type="interaction">
    <interactant intactId="EBI-10173151">
        <id>A2RU14</id>
    </interactant>
    <interactant intactId="EBI-8632435">
        <id>P43628</id>
        <label>KIR2DL3</label>
    </interactant>
    <organismsDiffer>false</organismsDiffer>
    <experiments>3</experiments>
</comment>
<comment type="interaction">
    <interactant intactId="EBI-10173151">
        <id>A2RU14</id>
    </interactant>
    <interactant intactId="EBI-10173166">
        <id>Q5T700</id>
        <label>LDLRAD1</label>
    </interactant>
    <organismsDiffer>false</organismsDiffer>
    <experiments>8</experiments>
</comment>
<comment type="interaction">
    <interactant intactId="EBI-10173151">
        <id>A2RU14</id>
    </interactant>
    <interactant intactId="EBI-2820517">
        <id>Q8TAF8</id>
        <label>LHFPL5</label>
    </interactant>
    <organismsDiffer>false</organismsDiffer>
    <experiments>3</experiments>
</comment>
<comment type="interaction">
    <interactant intactId="EBI-10173151">
        <id>A2RU14</id>
    </interactant>
    <interactant intactId="EBI-10264855">
        <id>Q8N112</id>
        <label>LSMEM2</label>
    </interactant>
    <organismsDiffer>false</organismsDiffer>
    <experiments>5</experiments>
</comment>
<comment type="interaction">
    <interactant intactId="EBI-10173151">
        <id>A2RU14</id>
    </interactant>
    <interactant intactId="EBI-11956541">
        <id>Q9GZY8-5</id>
        <label>MFF</label>
    </interactant>
    <organismsDiffer>false</organismsDiffer>
    <experiments>3</experiments>
</comment>
<comment type="interaction">
    <interactant intactId="EBI-10173151">
        <id>A2RU14</id>
    </interactant>
    <interactant intactId="EBI-12806656">
        <id>Q96HJ5</id>
        <label>MS4A3</label>
    </interactant>
    <organismsDiffer>false</organismsDiffer>
    <experiments>5</experiments>
</comment>
<comment type="interaction">
    <interactant intactId="EBI-10173151">
        <id>A2RU14</id>
    </interactant>
    <interactant intactId="EBI-3923617">
        <id>Q9H2K0</id>
        <label>MTIF3</label>
    </interactant>
    <organismsDiffer>false</organismsDiffer>
    <experiments>3</experiments>
</comment>
<comment type="interaction">
    <interactant intactId="EBI-10173151">
        <id>A2RU14</id>
    </interactant>
    <interactant intactId="EBI-18076879">
        <id>Q9Y5X5-3</id>
        <label>NPFFR2</label>
    </interactant>
    <organismsDiffer>false</organismsDiffer>
    <experiments>3</experiments>
</comment>
<comment type="interaction">
    <interactant intactId="EBI-10173151">
        <id>A2RU14</id>
    </interactant>
    <interactant intactId="EBI-358311">
        <id>P12004</id>
        <label>PCNA</label>
    </interactant>
    <organismsDiffer>false</organismsDiffer>
    <experiments>4</experiments>
</comment>
<comment type="interaction">
    <interactant intactId="EBI-10173151">
        <id>A2RU14</id>
    </interactant>
    <interactant intactId="EBI-16427978">
        <id>Q9BQ51</id>
        <label>PDCD1LG2</label>
    </interactant>
    <organismsDiffer>false</organismsDiffer>
    <experiments>3</experiments>
</comment>
<comment type="interaction">
    <interactant intactId="EBI-10173151">
        <id>A2RU14</id>
    </interactant>
    <interactant intactId="EBI-10285708">
        <id>Q96FE7</id>
        <label>PIK3IP1</label>
    </interactant>
    <organismsDiffer>false</organismsDiffer>
    <experiments>3</experiments>
</comment>
<comment type="interaction">
    <interactant intactId="EBI-10173151">
        <id>A2RU14</id>
    </interactant>
    <interactant intactId="EBI-949945">
        <id>Q53GL0</id>
        <label>PLEKHO1</label>
    </interactant>
    <organismsDiffer>false</organismsDiffer>
    <experiments>3</experiments>
</comment>
<comment type="interaction">
    <interactant intactId="EBI-10173151">
        <id>A2RU14</id>
    </interactant>
    <interactant intactId="EBI-10192441">
        <id>Q86VR2</id>
        <label>RETREG3</label>
    </interactant>
    <organismsDiffer>false</organismsDiffer>
    <experiments>3</experiments>
</comment>
<comment type="interaction">
    <interactant intactId="EBI-10173151">
        <id>A2RU14</id>
    </interactant>
    <interactant intactId="EBI-3920694">
        <id>Q9NR31</id>
        <label>SAR1A</label>
    </interactant>
    <organismsDiffer>false</organismsDiffer>
    <experiments>3</experiments>
</comment>
<comment type="interaction">
    <interactant intactId="EBI-10173151">
        <id>A2RU14</id>
    </interactant>
    <interactant intactId="EBI-10204280">
        <id>A0A0S2Z4U3</id>
        <label>SDC3</label>
    </interactant>
    <organismsDiffer>false</organismsDiffer>
    <experiments>3</experiments>
</comment>
<comment type="interaction">
    <interactant intactId="EBI-10173151">
        <id>A2RU14</id>
    </interactant>
    <interactant intactId="EBI-17456472">
        <id>Q96EP9</id>
        <label>SLC10A4</label>
    </interactant>
    <organismsDiffer>false</organismsDiffer>
    <experiments>3</experiments>
</comment>
<comment type="interaction">
    <interactant intactId="EBI-10173151">
        <id>A2RU14</id>
    </interactant>
    <interactant intactId="EBI-18159983">
        <id>Q3KNW5</id>
        <label>SLC10A6</label>
    </interactant>
    <organismsDiffer>false</organismsDiffer>
    <experiments>3</experiments>
</comment>
<comment type="interaction">
    <interactant intactId="EBI-10173151">
        <id>A2RU14</id>
    </interactant>
    <interactant intactId="EBI-17595455">
        <id>P54219-3</id>
        <label>SLC18A1</label>
    </interactant>
    <organismsDiffer>false</organismsDiffer>
    <experiments>3</experiments>
</comment>
<comment type="interaction">
    <interactant intactId="EBI-10173151">
        <id>A2RU14</id>
    </interactant>
    <interactant intactId="EBI-741850">
        <id>Q9BZL3</id>
        <label>SMIM3</label>
    </interactant>
    <organismsDiffer>false</organismsDiffer>
    <experiments>3</experiments>
</comment>
<comment type="interaction">
    <interactant intactId="EBI-10173151">
        <id>A2RU14</id>
    </interactant>
    <interactant intactId="EBI-17280858">
        <id>Q8WWF3</id>
        <label>SSMEM1</label>
    </interactant>
    <organismsDiffer>false</organismsDiffer>
    <experiments>3</experiments>
</comment>
<comment type="interaction">
    <interactant intactId="EBI-10173151">
        <id>A2RU14</id>
    </interactant>
    <interactant intactId="EBI-13351685">
        <id>Q96CE8</id>
        <label>TM4SF18</label>
    </interactant>
    <organismsDiffer>false</organismsDiffer>
    <experiments>3</experiments>
</comment>
<comment type="interaction">
    <interactant intactId="EBI-10173151">
        <id>A2RU14</id>
    </interactant>
    <interactant intactId="EBI-11603430">
        <id>Q6PL24</id>
        <label>TMED8</label>
    </interactant>
    <organismsDiffer>false</organismsDiffer>
    <experiments>3</experiments>
</comment>
<comment type="interaction">
    <interactant intactId="EBI-10173151">
        <id>A2RU14</id>
    </interactant>
    <interactant intactId="EBI-2821497">
        <id>Q9BVX2</id>
        <label>TMEM106C</label>
    </interactant>
    <organismsDiffer>false</organismsDiffer>
    <experiments>3</experiments>
</comment>
<comment type="interaction">
    <interactant intactId="EBI-10173151">
        <id>A2RU14</id>
    </interactant>
    <interactant intactId="EBI-10255122">
        <id>Q6ZP80</id>
        <label>TMEM182</label>
    </interactant>
    <organismsDiffer>false</organismsDiffer>
    <experiments>3</experiments>
</comment>
<comment type="interaction">
    <interactant intactId="EBI-10173151">
        <id>A2RU14</id>
    </interactant>
    <interactant intactId="EBI-13301303">
        <id>Q6UWW9</id>
        <label>TMEM207</label>
    </interactant>
    <organismsDiffer>false</organismsDiffer>
    <experiments>3</experiments>
</comment>
<comment type="interaction">
    <interactant intactId="EBI-10173151">
        <id>A2RU14</id>
    </interactant>
    <interactant intactId="EBI-8642211">
        <id>Q8WY98</id>
        <label>TMEM234</label>
    </interactant>
    <organismsDiffer>false</organismsDiffer>
    <experiments>3</experiments>
</comment>
<comment type="interaction">
    <interactant intactId="EBI-10173151">
        <id>A2RU14</id>
    </interactant>
    <interactant intactId="EBI-3923061">
        <id>Q96B21</id>
        <label>TMEM45B</label>
    </interactant>
    <organismsDiffer>false</organismsDiffer>
    <experiments>3</experiments>
</comment>
<comment type="interaction">
    <interactant intactId="EBI-10173151">
        <id>A2RU14</id>
    </interactant>
    <interactant intactId="EBI-18178701">
        <id>Q4KMG9</id>
        <label>TMEM52B</label>
    </interactant>
    <organismsDiffer>false</organismsDiffer>
    <experiments>3</experiments>
</comment>
<comment type="interaction">
    <interactant intactId="EBI-10173151">
        <id>A2RU14</id>
    </interactant>
    <interactant intactId="EBI-17198826">
        <id>Q6PEY1</id>
        <label>TMEM88</label>
    </interactant>
    <organismsDiffer>false</organismsDiffer>
    <experiments>3</experiments>
</comment>
<comment type="interaction">
    <interactant intactId="EBI-10173151">
        <id>A2RU14</id>
    </interactant>
    <interactant intactId="EBI-12345267">
        <id>O15393-2</id>
        <label>TMPRSS2</label>
    </interactant>
    <organismsDiffer>false</organismsDiffer>
    <experiments>3</experiments>
</comment>
<comment type="interaction">
    <interactant intactId="EBI-10173151">
        <id>A2RU14</id>
    </interactant>
    <interactant intactId="EBI-18055230">
        <id>P34981</id>
        <label>TRHR</label>
    </interactant>
    <organismsDiffer>false</organismsDiffer>
    <experiments>3</experiments>
</comment>
<comment type="interaction">
    <interactant intactId="EBI-10173151">
        <id>A2RU14</id>
    </interactant>
    <interactant intactId="EBI-2466403">
        <id>O95859</id>
        <label>TSPAN12</label>
    </interactant>
    <organismsDiffer>false</organismsDiffer>
    <experiments>3</experiments>
</comment>
<comment type="interaction">
    <interactant intactId="EBI-10173151">
        <id>A2RU14</id>
    </interactant>
    <interactant intactId="EBI-17670824">
        <id>Q8WUV1</id>
        <label>TSPAN18</label>
    </interactant>
    <organismsDiffer>false</organismsDiffer>
    <experiments>3</experiments>
</comment>
<comment type="interaction">
    <interactant intactId="EBI-10173151">
        <id>A2RU14</id>
    </interactant>
    <interactant intactId="EBI-744988">
        <id>Q9H7M9</id>
        <label>VSIR</label>
    </interactant>
    <organismsDiffer>false</organismsDiffer>
    <experiments>3</experiments>
</comment>
<comment type="subcellular location">
    <subcellularLocation>
        <location evidence="5">Membrane</location>
        <topology evidence="5">Multi-pass membrane protein</topology>
    </subcellularLocation>
    <subcellularLocation>
        <location evidence="1">Cell projection</location>
        <location evidence="1">Cilium</location>
    </subcellularLocation>
    <text evidence="1">Localizes at the transition zone, a region between the basal body and the ciliary axoneme.</text>
</comment>
<comment type="disease">
    <text evidence="3 4">TMEM218 mutations result in ciliary dysfunction leading to a broad spectrum of disorders, collectively termed ciliopathies. Overlapping clinical features include retinal degeneration, renal cystic disease, skeletal abnormalities, fibrosis of various organ, and a complex range of anatomical and functional defects of the central and peripheral nervous system. The ciliopathy range of diseases includes Meckel-Gruber syndrome, Bardet-Biedl syndrome, Joubert syndrome, and nephronophtisis among others. Single-locus allelism is insufficient to explain the variable penetrance and expressivity of such disorders, leading to the suggestion that variations across multiple sites of the ciliary proteome influence the clinical outcome.</text>
</comment>
<comment type="disease" evidence="3 4">
    <disease id="DI-06239">
        <name>Joubert syndrome 39</name>
        <acronym>JBTS39</acronym>
        <description>A form of Joubert syndrome, a disorder presenting with cerebellar ataxia, oculomotor apraxia, hypotonia, neonatal breathing abnormalities and psychomotor delay. Neuroradiologically, it is characterized by cerebellar vermian hypoplasia/aplasia, thickened and reoriented superior cerebellar peduncles, and an abnormally large interpeduncular fossa, giving the appearance of a molar tooth on transaxial slices (molar tooth sign). Additional variable features include retinal dystrophy, renal disease, liver fibrosis, and polydactyly. JBTS39 inheritance is autosomal recessive.</description>
        <dbReference type="MIM" id="619562"/>
    </disease>
    <text>The disease is caused by variants affecting the gene represented in this entry.</text>
</comment>
<comment type="similarity">
    <text evidence="5">Belongs to the TMEM218 family.</text>
</comment>
<accession>A2RU14</accession>
<accession>B7ZM48</accession>
<evidence type="ECO:0000250" key="1">
    <source>
        <dbReference type="UniProtKB" id="Q9CQ44"/>
    </source>
</evidence>
<evidence type="ECO:0000255" key="2"/>
<evidence type="ECO:0000269" key="3">
    <source>
    </source>
</evidence>
<evidence type="ECO:0000269" key="4">
    <source>
    </source>
</evidence>
<evidence type="ECO:0000305" key="5"/>
<protein>
    <recommendedName>
        <fullName>Transmembrane protein 218</fullName>
    </recommendedName>
</protein>